<reference key="1">
    <citation type="journal article" date="1989" name="J. Gen. Virol.">
        <title>Identification and characterization of the potato leafroll virus putative coat protein gene.</title>
        <authorList>
            <person name="Kawchuk L.M."/>
            <person name="Martin R.R."/>
            <person name="Rochon D.M."/>
            <person name="McPherson J."/>
        </authorList>
    </citation>
    <scope>NUCLEOTIDE SEQUENCE [GENOMIC RNA]</scope>
</reference>
<reference key="2">
    <citation type="journal article" date="2002" name="Mol. Plant Microbe Interact.">
        <title>Host-dependent requirement for the Potato leafroll virus 17-kda protein in virus movement.</title>
        <authorList>
            <person name="Lee L."/>
            <person name="Palukaitis P."/>
            <person name="Gray S.M."/>
        </authorList>
    </citation>
    <scope>FUNCTION</scope>
</reference>
<comment type="function">
    <text evidence="2 6 7">Together with movement protein P3a, facilitates long-distance movement of virions in host (Probable). Transports viral genome to neighboring plant cells directly through plasmosdesmata, without any budding (Probable). The movement protein allows efficient cell to cell propagation, by bypassing the host cell wall barrier (Probable). Binds ssRNA (By similarity).</text>
</comment>
<comment type="subunit">
    <text evidence="2">Homodimer.</text>
</comment>
<comment type="subcellular location">
    <subcellularLocation>
        <location evidence="2">Host cell junction</location>
        <location evidence="2">Host plasmodesma</location>
    </subcellularLocation>
    <subcellularLocation>
        <location evidence="2">Host chloroplast envelope</location>
    </subcellularLocation>
    <subcellularLocation>
        <location evidence="1">Host Golgi apparatus</location>
    </subcellularLocation>
    <subcellularLocation>
        <location evidence="3">Host mitochondrion outer membrane</location>
    </subcellularLocation>
    <text evidence="2 3">Localizes to secondary branched plasmodesmata in source organs. Targeted to plasmodesmata in an actin- and endoplasmic reticulum-Golgi-dependent manner (By similarity). P3a directs P17 to the mitochondrial outer membrane while P17 regulates the localization of the P3a-P17 heterodimer to plastids (By similarity).</text>
</comment>
<comment type="domain">
    <text evidence="2">The N-terminus is involved in homodimerization. The C-terminus binds ssRNA. The C-terminus is phosphorylated.</text>
</comment>
<comment type="PTM">
    <text evidence="2">Expressed as a nonphosphorylated 20kDa form and a phosphorylated 22kDa form. Phosphorylated by a host PKC-related kinase (By similarity). Serine phosphorylation is required for plamodesma targeting (By similarity).</text>
</comment>
<comment type="miscellaneous">
    <text evidence="3">Poleroviruses are transmitted by aphids directly into phloem tissue. The virus replicates most efficiently in phloem companion cells and then moves through plasmodesmata between companion cells or into sieve elements for long distance transport.</text>
</comment>
<comment type="similarity">
    <text evidence="6">Belongs to the polerovirus movement protein family.</text>
</comment>
<sequence length="156" mass="17381">MSMVVYNNQEGEEGNPFAGALTEFSQWLWSRPLGNPGAEDAEEEAIAAQEELEFPEDEAQARHSCLQRTTSWATPKEVSPSGRVYQTVRHSRMEYSRPTMSIRSQASYFSSSARPLPPPPVPSLMSWTPIAKYHPSSPTSTSSKLRRAAPKLIKRG</sequence>
<gene>
    <name type="ORF">ORF4</name>
</gene>
<feature type="chain" id="PRO_0000222423" description="Movement protein P17">
    <location>
        <begin position="1"/>
        <end position="156"/>
    </location>
</feature>
<feature type="region of interest" description="Homodimerization" evidence="2">
    <location>
        <begin position="38"/>
        <end position="54"/>
    </location>
</feature>
<feature type="region of interest" description="Disordered" evidence="4">
    <location>
        <begin position="55"/>
        <end position="80"/>
    </location>
</feature>
<feature type="region of interest" description="RNA-binding" evidence="2">
    <location>
        <begin position="57"/>
        <end position="156"/>
    </location>
</feature>
<feature type="region of interest" description="Disordered" evidence="4">
    <location>
        <begin position="106"/>
        <end position="156"/>
    </location>
</feature>
<feature type="compositionally biased region" description="Basic residues" evidence="4">
    <location>
        <begin position="144"/>
        <end position="156"/>
    </location>
</feature>
<feature type="modified residue" description="Phosphoserine" evidence="2">
    <location>
        <position position="71"/>
    </location>
</feature>
<feature type="modified residue" description="Phosphoserine" evidence="2">
    <location>
        <position position="79"/>
    </location>
</feature>
<feature type="modified residue" description="Phosphoserine" evidence="2">
    <location>
        <position position="137"/>
    </location>
</feature>
<feature type="modified residue" description="Phosphoserine" evidence="2">
    <location>
        <position position="140"/>
    </location>
</feature>
<dbReference type="EMBL" id="D13753">
    <property type="protein sequence ID" value="BAA02901.1"/>
    <property type="molecule type" value="Genomic_RNA"/>
</dbReference>
<dbReference type="PIR" id="JQ0002">
    <property type="entry name" value="GNVQL2"/>
</dbReference>
<dbReference type="GO" id="GO:0044177">
    <property type="term" value="C:host cell Golgi apparatus"/>
    <property type="evidence" value="ECO:0007669"/>
    <property type="project" value="UniProtKB-SubCell"/>
</dbReference>
<dbReference type="GO" id="GO:0044193">
    <property type="term" value="C:host cell mitochondrial outer membrane"/>
    <property type="evidence" value="ECO:0007669"/>
    <property type="project" value="UniProtKB-SubCell"/>
</dbReference>
<dbReference type="GO" id="GO:0044219">
    <property type="term" value="C:host cell plasmodesma"/>
    <property type="evidence" value="ECO:0007669"/>
    <property type="project" value="UniProtKB-SubCell"/>
</dbReference>
<dbReference type="GO" id="GO:0016020">
    <property type="term" value="C:membrane"/>
    <property type="evidence" value="ECO:0007669"/>
    <property type="project" value="UniProtKB-KW"/>
</dbReference>
<dbReference type="GO" id="GO:0046740">
    <property type="term" value="P:transport of virus in host, cell to cell"/>
    <property type="evidence" value="ECO:0007669"/>
    <property type="project" value="UniProtKB-KW"/>
</dbReference>
<dbReference type="InterPro" id="IPR001964">
    <property type="entry name" value="Luteo_VPG"/>
</dbReference>
<dbReference type="Pfam" id="PF01659">
    <property type="entry name" value="Luteo_Vpg"/>
    <property type="match status" value="1"/>
</dbReference>
<dbReference type="PRINTS" id="PR00912">
    <property type="entry name" value="LVIRUSORF5"/>
</dbReference>
<proteinExistence type="inferred from homology"/>
<organism>
    <name type="scientific">Potato leafroll virus (strain Potato/Canada/Rowhani/1979)</name>
    <name type="common">PLrV</name>
    <dbReference type="NCBI Taxonomy" id="12047"/>
    <lineage>
        <taxon>Viruses</taxon>
        <taxon>Riboviria</taxon>
        <taxon>Orthornavirae</taxon>
        <taxon>Pisuviricota</taxon>
        <taxon>Pisoniviricetes</taxon>
        <taxon>Sobelivirales</taxon>
        <taxon>Solemoviridae</taxon>
        <taxon>Polerovirus</taxon>
        <taxon>Potato leafroll virus</taxon>
    </lineage>
</organism>
<evidence type="ECO:0000250" key="1">
    <source>
        <dbReference type="UniProtKB" id="P09511"/>
    </source>
</evidence>
<evidence type="ECO:0000250" key="2">
    <source>
        <dbReference type="UniProtKB" id="P10471"/>
    </source>
</evidence>
<evidence type="ECO:0000250" key="3">
    <source>
        <dbReference type="UniProtKB" id="P17524"/>
    </source>
</evidence>
<evidence type="ECO:0000256" key="4">
    <source>
        <dbReference type="SAM" id="MobiDB-lite"/>
    </source>
</evidence>
<evidence type="ECO:0000303" key="5">
    <source>
    </source>
</evidence>
<evidence type="ECO:0000305" key="6"/>
<evidence type="ECO:0000305" key="7">
    <source>
    </source>
</evidence>
<accession>P17523</accession>
<keyword id="KW-1031">Host cell junction</keyword>
<keyword id="KW-1040">Host Golgi apparatus</keyword>
<keyword id="KW-1043">Host membrane</keyword>
<keyword id="KW-1045">Host mitochondrion</keyword>
<keyword id="KW-1047">Host mitochondrion outer membrane</keyword>
<keyword id="KW-0472">Membrane</keyword>
<keyword id="KW-0597">Phosphoprotein</keyword>
<keyword id="KW-0813">Transport</keyword>
<keyword id="KW-0916">Viral movement protein</keyword>
<name>MVP_PLRVR</name>
<organismHost>
    <name type="scientific">Solanum tuberosum</name>
    <name type="common">Potato</name>
    <dbReference type="NCBI Taxonomy" id="4113"/>
</organismHost>
<protein>
    <recommendedName>
        <fullName evidence="5">Movement protein P17</fullName>
        <shortName>MP</shortName>
    </recommendedName>
    <alternativeName>
        <fullName>17 kDa protein</fullName>
    </alternativeName>
    <alternativeName>
        <fullName>MP17</fullName>
    </alternativeName>
</protein>